<protein>
    <recommendedName>
        <fullName evidence="1">Dipeptide and tripeptide permease B</fullName>
    </recommendedName>
</protein>
<gene>
    <name evidence="1" type="primary">dtpB</name>
    <name type="ordered locus">SDY_3566</name>
</gene>
<sequence length="489" mass="53325">MNTTTPMGMLQQPRPFFMIFFVELWERFGYYGVQGVLAVFFVKQLGFSQEQAFVTFGAFAALVYGLISIGGYVGDHLLGTKRTIVLGALVLAIGYFMTGLSLLKPDLIFIALGTIAVGNGLFKANPASLLSKCYPPKAPRLDGAFTLFYMSINIGSLIALSLAPVIADRFGYSVTYNLCGAGLIIALLVYIACRGMVKDIGSEPDFRPMSFSKLLYVLLGSVVMIFVCAWLMHNVEVANLVLIVLSIVVTIIFFRQAFKLDKTGRNKMFVAFVLMLEAVVFYILYAQMPTSLNFFAINNVHHEILGFSINPVSFQALNPFWVVLASPILAGIYTHLGSKGKDLSMPMKFTLGMFMCSLGFLTAAAAGMWFADAQGLTSPWFIVLVYLFQSLGELFISALGLAMVAALVPQHLMGFILGISFLTQAAAFLLGGYVATFTAVPDNITDPLETLPVYTNVFGKIGLVTLGVAVVMLLMVPWLKRMIAAPESH</sequence>
<dbReference type="EMBL" id="CP000034">
    <property type="protein sequence ID" value="ABB63540.1"/>
    <property type="status" value="ALT_FRAME"/>
    <property type="molecule type" value="Genomic_DNA"/>
</dbReference>
<dbReference type="SMR" id="Q32AW5"/>
<dbReference type="EnsemblBacteria" id="ABB63540">
    <property type="protein sequence ID" value="ABB63540"/>
    <property type="gene ID" value="SDY_3566"/>
</dbReference>
<dbReference type="KEGG" id="sdy:SDY_3566"/>
<dbReference type="HOGENOM" id="CLU_004790_0_0_6"/>
<dbReference type="Proteomes" id="UP000002716">
    <property type="component" value="Chromosome"/>
</dbReference>
<dbReference type="GO" id="GO:0005886">
    <property type="term" value="C:plasma membrane"/>
    <property type="evidence" value="ECO:0007669"/>
    <property type="project" value="UniProtKB-SubCell"/>
</dbReference>
<dbReference type="GO" id="GO:0071916">
    <property type="term" value="F:dipeptide transmembrane transporter activity"/>
    <property type="evidence" value="ECO:0007669"/>
    <property type="project" value="UniProtKB-UniRule"/>
</dbReference>
<dbReference type="GO" id="GO:0015333">
    <property type="term" value="F:peptide:proton symporter activity"/>
    <property type="evidence" value="ECO:0007669"/>
    <property type="project" value="UniProtKB-UniRule"/>
</dbReference>
<dbReference type="GO" id="GO:0042937">
    <property type="term" value="F:tripeptide transmembrane transporter activity"/>
    <property type="evidence" value="ECO:0007669"/>
    <property type="project" value="UniProtKB-UniRule"/>
</dbReference>
<dbReference type="GO" id="GO:0015031">
    <property type="term" value="P:protein transport"/>
    <property type="evidence" value="ECO:0007669"/>
    <property type="project" value="UniProtKB-KW"/>
</dbReference>
<dbReference type="CDD" id="cd17346">
    <property type="entry name" value="MFS_DtpA_like"/>
    <property type="match status" value="1"/>
</dbReference>
<dbReference type="FunFam" id="1.20.1250.20:FF:000017">
    <property type="entry name" value="Dipeptide and tripeptide permease A"/>
    <property type="match status" value="1"/>
</dbReference>
<dbReference type="Gene3D" id="1.20.1250.20">
    <property type="entry name" value="MFS general substrate transporter like domains"/>
    <property type="match status" value="1"/>
</dbReference>
<dbReference type="HAMAP" id="MF_01879">
    <property type="entry name" value="PTR2_DtpB_subfam"/>
    <property type="match status" value="1"/>
</dbReference>
<dbReference type="InterPro" id="IPR023778">
    <property type="entry name" value="AA/pep_transptr_DtpB"/>
</dbReference>
<dbReference type="InterPro" id="IPR005279">
    <property type="entry name" value="Dipep/tripep_permease"/>
</dbReference>
<dbReference type="InterPro" id="IPR036259">
    <property type="entry name" value="MFS_trans_sf"/>
</dbReference>
<dbReference type="InterPro" id="IPR050171">
    <property type="entry name" value="MFS_Transporters"/>
</dbReference>
<dbReference type="InterPro" id="IPR000109">
    <property type="entry name" value="POT_fam"/>
</dbReference>
<dbReference type="InterPro" id="IPR018456">
    <property type="entry name" value="PTR2_symporter_CS"/>
</dbReference>
<dbReference type="NCBIfam" id="NF007575">
    <property type="entry name" value="PRK10207.1"/>
    <property type="match status" value="1"/>
</dbReference>
<dbReference type="NCBIfam" id="TIGR00924">
    <property type="entry name" value="yjdL_sub1_fam"/>
    <property type="match status" value="1"/>
</dbReference>
<dbReference type="PANTHER" id="PTHR23517:SF15">
    <property type="entry name" value="PROTON-DEPENDENT OLIGOPEPTIDE FAMILY TRANSPORT PROTEIN"/>
    <property type="match status" value="1"/>
</dbReference>
<dbReference type="PANTHER" id="PTHR23517">
    <property type="entry name" value="RESISTANCE PROTEIN MDTM, PUTATIVE-RELATED-RELATED"/>
    <property type="match status" value="1"/>
</dbReference>
<dbReference type="Pfam" id="PF00854">
    <property type="entry name" value="PTR2"/>
    <property type="match status" value="1"/>
</dbReference>
<dbReference type="SUPFAM" id="SSF103473">
    <property type="entry name" value="MFS general substrate transporter"/>
    <property type="match status" value="1"/>
</dbReference>
<dbReference type="PROSITE" id="PS01022">
    <property type="entry name" value="PTR2_1"/>
    <property type="match status" value="1"/>
</dbReference>
<dbReference type="PROSITE" id="PS01023">
    <property type="entry name" value="PTR2_2"/>
    <property type="match status" value="1"/>
</dbReference>
<evidence type="ECO:0000255" key="1">
    <source>
        <dbReference type="HAMAP-Rule" id="MF_01879"/>
    </source>
</evidence>
<evidence type="ECO:0000305" key="2"/>
<name>DTPB_SHIDS</name>
<proteinExistence type="inferred from homology"/>
<organism>
    <name type="scientific">Shigella dysenteriae serotype 1 (strain Sd197)</name>
    <dbReference type="NCBI Taxonomy" id="300267"/>
    <lineage>
        <taxon>Bacteria</taxon>
        <taxon>Pseudomonadati</taxon>
        <taxon>Pseudomonadota</taxon>
        <taxon>Gammaproteobacteria</taxon>
        <taxon>Enterobacterales</taxon>
        <taxon>Enterobacteriaceae</taxon>
        <taxon>Shigella</taxon>
    </lineage>
</organism>
<comment type="function">
    <text evidence="1">Proton-dependent permease that transports di- and tripeptides.</text>
</comment>
<comment type="subcellular location">
    <subcellularLocation>
        <location evidence="1">Cell inner membrane</location>
        <topology evidence="1">Multi-pass membrane protein</topology>
    </subcellularLocation>
</comment>
<comment type="similarity">
    <text evidence="1">Belongs to the major facilitator superfamily. Proton-dependent oligopeptide transporter (POT/PTR) (TC 2.A.17) family. DtpB subfamily.</text>
</comment>
<comment type="sequence caution" evidence="2">
    <conflict type="frameshift">
        <sequence resource="EMBL-CDS" id="ABB63540"/>
    </conflict>
</comment>
<feature type="chain" id="PRO_0000395188" description="Dipeptide and tripeptide permease B">
    <location>
        <begin position="1"/>
        <end position="489"/>
    </location>
</feature>
<feature type="topological domain" description="Cytoplasmic" evidence="1">
    <location>
        <begin position="1"/>
        <end position="27"/>
    </location>
</feature>
<feature type="transmembrane region" description="Helical" evidence="1">
    <location>
        <begin position="28"/>
        <end position="48"/>
    </location>
</feature>
<feature type="topological domain" description="Periplasmic" evidence="1">
    <location>
        <begin position="49"/>
        <end position="52"/>
    </location>
</feature>
<feature type="transmembrane region" description="Helical" evidence="1">
    <location>
        <begin position="53"/>
        <end position="73"/>
    </location>
</feature>
<feature type="topological domain" description="Cytoplasmic" evidence="1">
    <location>
        <begin position="74"/>
        <end position="82"/>
    </location>
</feature>
<feature type="transmembrane region" description="Helical" evidence="1">
    <location>
        <begin position="83"/>
        <end position="103"/>
    </location>
</feature>
<feature type="topological domain" description="Periplasmic" evidence="1">
    <location>
        <begin position="104"/>
        <end position="106"/>
    </location>
</feature>
<feature type="transmembrane region" description="Helical" evidence="1">
    <location>
        <begin position="107"/>
        <end position="127"/>
    </location>
</feature>
<feature type="topological domain" description="Cytoplasmic" evidence="1">
    <location>
        <begin position="128"/>
        <end position="146"/>
    </location>
</feature>
<feature type="transmembrane region" description="Helical" evidence="1">
    <location>
        <begin position="147"/>
        <end position="167"/>
    </location>
</feature>
<feature type="topological domain" description="Periplasmic" evidence="1">
    <location>
        <begin position="168"/>
        <end position="172"/>
    </location>
</feature>
<feature type="transmembrane region" description="Helical" evidence="1">
    <location>
        <begin position="173"/>
        <end position="193"/>
    </location>
</feature>
<feature type="topological domain" description="Cytoplasmic" evidence="1">
    <location>
        <begin position="194"/>
        <end position="210"/>
    </location>
</feature>
<feature type="transmembrane region" description="Helical" evidence="1">
    <location>
        <begin position="211"/>
        <end position="231"/>
    </location>
</feature>
<feature type="topological domain" description="Periplasmic" evidence="1">
    <location>
        <begin position="232"/>
        <end position="233"/>
    </location>
</feature>
<feature type="transmembrane region" description="Helical" evidence="1">
    <location>
        <begin position="234"/>
        <end position="254"/>
    </location>
</feature>
<feature type="topological domain" description="Cytoplasmic" evidence="1">
    <location>
        <begin position="255"/>
        <end position="267"/>
    </location>
</feature>
<feature type="transmembrane region" description="Helical" evidence="1">
    <location>
        <begin position="268"/>
        <end position="288"/>
    </location>
</feature>
<feature type="topological domain" description="Periplasmic" evidence="1">
    <location>
        <begin position="289"/>
        <end position="311"/>
    </location>
</feature>
<feature type="transmembrane region" description="Helical" evidence="1">
    <location>
        <begin position="312"/>
        <end position="332"/>
    </location>
</feature>
<feature type="topological domain" description="Cytoplasmic" evidence="1">
    <location>
        <begin position="333"/>
        <end position="350"/>
    </location>
</feature>
<feature type="transmembrane region" description="Helical" evidence="1">
    <location>
        <begin position="351"/>
        <end position="371"/>
    </location>
</feature>
<feature type="topological domain" description="Periplasmic" evidence="1">
    <location>
        <begin position="372"/>
        <end position="380"/>
    </location>
</feature>
<feature type="transmembrane region" description="Helical" evidence="1">
    <location>
        <begin position="381"/>
        <end position="401"/>
    </location>
</feature>
<feature type="topological domain" description="Cytoplasmic" evidence="1">
    <location>
        <begin position="402"/>
        <end position="411"/>
    </location>
</feature>
<feature type="transmembrane region" description="Helical" evidence="1">
    <location>
        <begin position="412"/>
        <end position="432"/>
    </location>
</feature>
<feature type="topological domain" description="Periplasmic" evidence="1">
    <location>
        <begin position="433"/>
        <end position="456"/>
    </location>
</feature>
<feature type="transmembrane region" description="Helical" evidence="1">
    <location>
        <begin position="457"/>
        <end position="477"/>
    </location>
</feature>
<feature type="topological domain" description="Cytoplasmic" evidence="1">
    <location>
        <begin position="478"/>
        <end position="489"/>
    </location>
</feature>
<keyword id="KW-0997">Cell inner membrane</keyword>
<keyword id="KW-1003">Cell membrane</keyword>
<keyword id="KW-0472">Membrane</keyword>
<keyword id="KW-0571">Peptide transport</keyword>
<keyword id="KW-0653">Protein transport</keyword>
<keyword id="KW-1185">Reference proteome</keyword>
<keyword id="KW-0812">Transmembrane</keyword>
<keyword id="KW-1133">Transmembrane helix</keyword>
<keyword id="KW-0813">Transport</keyword>
<reference key="1">
    <citation type="journal article" date="2005" name="Nucleic Acids Res.">
        <title>Genome dynamics and diversity of Shigella species, the etiologic agents of bacillary dysentery.</title>
        <authorList>
            <person name="Yang F."/>
            <person name="Yang J."/>
            <person name="Zhang X."/>
            <person name="Chen L."/>
            <person name="Jiang Y."/>
            <person name="Yan Y."/>
            <person name="Tang X."/>
            <person name="Wang J."/>
            <person name="Xiong Z."/>
            <person name="Dong J."/>
            <person name="Xue Y."/>
            <person name="Zhu Y."/>
            <person name="Xu X."/>
            <person name="Sun L."/>
            <person name="Chen S."/>
            <person name="Nie H."/>
            <person name="Peng J."/>
            <person name="Xu J."/>
            <person name="Wang Y."/>
            <person name="Yuan Z."/>
            <person name="Wen Y."/>
            <person name="Yao Z."/>
            <person name="Shen Y."/>
            <person name="Qiang B."/>
            <person name="Hou Y."/>
            <person name="Yu J."/>
            <person name="Jin Q."/>
        </authorList>
    </citation>
    <scope>NUCLEOTIDE SEQUENCE [LARGE SCALE GENOMIC DNA]</scope>
    <source>
        <strain>Sd197</strain>
    </source>
</reference>
<accession>Q32AW5</accession>